<gene>
    <name evidence="1" type="primary">rplC</name>
    <name evidence="1" type="synonym">rpl3</name>
    <name type="ordered locus">cce_4013</name>
</gene>
<reference key="1">
    <citation type="journal article" date="2008" name="Proc. Natl. Acad. Sci. U.S.A.">
        <title>The genome of Cyanothece 51142, a unicellular diazotrophic cyanobacterium important in the marine nitrogen cycle.</title>
        <authorList>
            <person name="Welsh E.A."/>
            <person name="Liberton M."/>
            <person name="Stoeckel J."/>
            <person name="Loh T."/>
            <person name="Elvitigala T."/>
            <person name="Wang C."/>
            <person name="Wollam A."/>
            <person name="Fulton R.S."/>
            <person name="Clifton S.W."/>
            <person name="Jacobs J.M."/>
            <person name="Aurora R."/>
            <person name="Ghosh B.K."/>
            <person name="Sherman L.A."/>
            <person name="Smith R.D."/>
            <person name="Wilson R.K."/>
            <person name="Pakrasi H.B."/>
        </authorList>
    </citation>
    <scope>NUCLEOTIDE SEQUENCE [LARGE SCALE GENOMIC DNA]</scope>
    <source>
        <strain>ATCC 51142 / BH68</strain>
    </source>
</reference>
<keyword id="KW-1185">Reference proteome</keyword>
<keyword id="KW-0687">Ribonucleoprotein</keyword>
<keyword id="KW-0689">Ribosomal protein</keyword>
<keyword id="KW-0694">RNA-binding</keyword>
<keyword id="KW-0699">rRNA-binding</keyword>
<feature type="chain" id="PRO_1000165881" description="Large ribosomal subunit protein uL3">
    <location>
        <begin position="1"/>
        <end position="212"/>
    </location>
</feature>
<feature type="region of interest" description="Disordered" evidence="2">
    <location>
        <begin position="133"/>
        <end position="156"/>
    </location>
</feature>
<sequence length="212" mass="22553">MAVGLLGTKLGMTQIFEEESGLAIPVTVVQAGPCTITQIKTAETDGYSAIQIGYLEVKEKALTKPELGHLKKVEASPLRHLKEYRVDDTATYTLGEAVKADIFNAGDLVDIAGTSMGRGFAGYQKRHNFKRGSMTHGSKNHRLPGSTGAGTTPGRVYPGKKMAGQYGAVKTTTRHLQVVRVDAERNLLLIKGAVPGKPGGLLNITPAKIVGK</sequence>
<protein>
    <recommendedName>
        <fullName evidence="1">Large ribosomal subunit protein uL3</fullName>
    </recommendedName>
    <alternativeName>
        <fullName evidence="3">50S ribosomal protein L3</fullName>
    </alternativeName>
</protein>
<dbReference type="EMBL" id="CP000806">
    <property type="protein sequence ID" value="ACB53361.1"/>
    <property type="molecule type" value="Genomic_DNA"/>
</dbReference>
<dbReference type="RefSeq" id="WP_009543896.1">
    <property type="nucleotide sequence ID" value="NC_010546.1"/>
</dbReference>
<dbReference type="SMR" id="B1WQQ9"/>
<dbReference type="STRING" id="43989.cce_4013"/>
<dbReference type="KEGG" id="cyt:cce_4013"/>
<dbReference type="eggNOG" id="COG0087">
    <property type="taxonomic scope" value="Bacteria"/>
</dbReference>
<dbReference type="HOGENOM" id="CLU_044142_4_1_3"/>
<dbReference type="OrthoDB" id="9806135at2"/>
<dbReference type="Proteomes" id="UP000001203">
    <property type="component" value="Chromosome circular"/>
</dbReference>
<dbReference type="GO" id="GO:0022625">
    <property type="term" value="C:cytosolic large ribosomal subunit"/>
    <property type="evidence" value="ECO:0007669"/>
    <property type="project" value="TreeGrafter"/>
</dbReference>
<dbReference type="GO" id="GO:0019843">
    <property type="term" value="F:rRNA binding"/>
    <property type="evidence" value="ECO:0007669"/>
    <property type="project" value="UniProtKB-UniRule"/>
</dbReference>
<dbReference type="GO" id="GO:0003735">
    <property type="term" value="F:structural constituent of ribosome"/>
    <property type="evidence" value="ECO:0007669"/>
    <property type="project" value="InterPro"/>
</dbReference>
<dbReference type="GO" id="GO:0006412">
    <property type="term" value="P:translation"/>
    <property type="evidence" value="ECO:0007669"/>
    <property type="project" value="UniProtKB-UniRule"/>
</dbReference>
<dbReference type="FunFam" id="3.30.160.810:FF:000001">
    <property type="entry name" value="50S ribosomal protein L3"/>
    <property type="match status" value="1"/>
</dbReference>
<dbReference type="FunFam" id="2.40.30.10:FF:000065">
    <property type="entry name" value="50S ribosomal protein L3, chloroplastic"/>
    <property type="match status" value="1"/>
</dbReference>
<dbReference type="Gene3D" id="3.30.160.810">
    <property type="match status" value="1"/>
</dbReference>
<dbReference type="Gene3D" id="2.40.30.10">
    <property type="entry name" value="Translation factors"/>
    <property type="match status" value="1"/>
</dbReference>
<dbReference type="HAMAP" id="MF_01325_B">
    <property type="entry name" value="Ribosomal_uL3_B"/>
    <property type="match status" value="1"/>
</dbReference>
<dbReference type="InterPro" id="IPR000597">
    <property type="entry name" value="Ribosomal_uL3"/>
</dbReference>
<dbReference type="InterPro" id="IPR019927">
    <property type="entry name" value="Ribosomal_uL3_bac/org-type"/>
</dbReference>
<dbReference type="InterPro" id="IPR019926">
    <property type="entry name" value="Ribosomal_uL3_CS"/>
</dbReference>
<dbReference type="InterPro" id="IPR009000">
    <property type="entry name" value="Transl_B-barrel_sf"/>
</dbReference>
<dbReference type="NCBIfam" id="TIGR03625">
    <property type="entry name" value="L3_bact"/>
    <property type="match status" value="1"/>
</dbReference>
<dbReference type="PANTHER" id="PTHR11229">
    <property type="entry name" value="50S RIBOSOMAL PROTEIN L3"/>
    <property type="match status" value="1"/>
</dbReference>
<dbReference type="PANTHER" id="PTHR11229:SF16">
    <property type="entry name" value="LARGE RIBOSOMAL SUBUNIT PROTEIN UL3C"/>
    <property type="match status" value="1"/>
</dbReference>
<dbReference type="Pfam" id="PF00297">
    <property type="entry name" value="Ribosomal_L3"/>
    <property type="match status" value="1"/>
</dbReference>
<dbReference type="SUPFAM" id="SSF50447">
    <property type="entry name" value="Translation proteins"/>
    <property type="match status" value="1"/>
</dbReference>
<dbReference type="PROSITE" id="PS00474">
    <property type="entry name" value="RIBOSOMAL_L3"/>
    <property type="match status" value="1"/>
</dbReference>
<name>RL3_CROS5</name>
<comment type="function">
    <text evidence="1">One of the primary rRNA binding proteins, it binds directly near the 3'-end of the 23S rRNA, where it nucleates assembly of the 50S subunit.</text>
</comment>
<comment type="subunit">
    <text evidence="1">Part of the 50S ribosomal subunit. Forms a cluster with proteins L14 and L19.</text>
</comment>
<comment type="similarity">
    <text evidence="1">Belongs to the universal ribosomal protein uL3 family.</text>
</comment>
<evidence type="ECO:0000255" key="1">
    <source>
        <dbReference type="HAMAP-Rule" id="MF_01325"/>
    </source>
</evidence>
<evidence type="ECO:0000256" key="2">
    <source>
        <dbReference type="SAM" id="MobiDB-lite"/>
    </source>
</evidence>
<evidence type="ECO:0000305" key="3"/>
<organism>
    <name type="scientific">Crocosphaera subtropica (strain ATCC 51142 / BH68)</name>
    <name type="common">Cyanothece sp. (strain ATCC 51142)</name>
    <dbReference type="NCBI Taxonomy" id="43989"/>
    <lineage>
        <taxon>Bacteria</taxon>
        <taxon>Bacillati</taxon>
        <taxon>Cyanobacteriota</taxon>
        <taxon>Cyanophyceae</taxon>
        <taxon>Oscillatoriophycideae</taxon>
        <taxon>Chroococcales</taxon>
        <taxon>Aphanothecaceae</taxon>
        <taxon>Crocosphaera</taxon>
        <taxon>Crocosphaera subtropica</taxon>
    </lineage>
</organism>
<proteinExistence type="inferred from homology"/>
<accession>B1WQQ9</accession>